<comment type="function">
    <text evidence="1">One of the components of the core complex of photosystem II (PSII). It binds chlorophyll and helps catalyze the primary light-induced photochemical processes of PSII. PSII is a light-driven water:plastoquinone oxidoreductase, using light energy to abstract electrons from H(2)O, generating O(2) and a proton gradient subsequently used for ATP formation.</text>
</comment>
<comment type="cofactor">
    <text evidence="1">Binds multiple chlorophylls. PSII binds additional chlorophylls, carotenoids and specific lipids.</text>
</comment>
<comment type="subunit">
    <text evidence="1">PSII is composed of 1 copy each of membrane proteins PsbA, PsbB, PsbC, PsbD, PsbE, PsbF, PsbH, PsbI, PsbJ, PsbK, PsbL, PsbM, PsbT, PsbX, PsbY, PsbZ, Psb30/Ycf12, at least 3 peripheral proteins of the oxygen-evolving complex and a large number of cofactors. It forms dimeric complexes.</text>
</comment>
<comment type="subcellular location">
    <subcellularLocation>
        <location evidence="1">Plastid</location>
        <location evidence="1">Chloroplast thylakoid membrane</location>
        <topology evidence="1">Multi-pass membrane protein</topology>
    </subcellularLocation>
</comment>
<comment type="similarity">
    <text evidence="1">Belongs to the PsbB/PsbC family. PsbB subfamily.</text>
</comment>
<evidence type="ECO:0000255" key="1">
    <source>
        <dbReference type="HAMAP-Rule" id="MF_01495"/>
    </source>
</evidence>
<feature type="chain" id="PRO_0000359820" description="Photosystem II CP47 reaction center protein">
    <location>
        <begin position="1"/>
        <end position="508"/>
    </location>
</feature>
<feature type="transmembrane region" description="Helical" evidence="1">
    <location>
        <begin position="21"/>
        <end position="36"/>
    </location>
</feature>
<feature type="transmembrane region" description="Helical" evidence="1">
    <location>
        <begin position="101"/>
        <end position="115"/>
    </location>
</feature>
<feature type="transmembrane region" description="Helical" evidence="1">
    <location>
        <begin position="140"/>
        <end position="156"/>
    </location>
</feature>
<feature type="transmembrane region" description="Helical" evidence="1">
    <location>
        <begin position="203"/>
        <end position="218"/>
    </location>
</feature>
<feature type="transmembrane region" description="Helical" evidence="1">
    <location>
        <begin position="237"/>
        <end position="252"/>
    </location>
</feature>
<feature type="transmembrane region" description="Helical" evidence="1">
    <location>
        <begin position="457"/>
        <end position="472"/>
    </location>
</feature>
<name>PSBB_DRANE</name>
<proteinExistence type="inferred from homology"/>
<dbReference type="EMBL" id="AP009373">
    <property type="protein sequence ID" value="BAF50400.1"/>
    <property type="molecule type" value="Genomic_DNA"/>
</dbReference>
<dbReference type="RefSeq" id="YP_001123576.1">
    <property type="nucleotide sequence ID" value="NC_009272.1"/>
</dbReference>
<dbReference type="SMR" id="A4QL45"/>
<dbReference type="GeneID" id="4964691"/>
<dbReference type="GO" id="GO:0009535">
    <property type="term" value="C:chloroplast thylakoid membrane"/>
    <property type="evidence" value="ECO:0007669"/>
    <property type="project" value="UniProtKB-SubCell"/>
</dbReference>
<dbReference type="GO" id="GO:0009523">
    <property type="term" value="C:photosystem II"/>
    <property type="evidence" value="ECO:0007669"/>
    <property type="project" value="UniProtKB-KW"/>
</dbReference>
<dbReference type="GO" id="GO:0016168">
    <property type="term" value="F:chlorophyll binding"/>
    <property type="evidence" value="ECO:0007669"/>
    <property type="project" value="UniProtKB-UniRule"/>
</dbReference>
<dbReference type="GO" id="GO:0045156">
    <property type="term" value="F:electron transporter, transferring electrons within the cyclic electron transport pathway of photosynthesis activity"/>
    <property type="evidence" value="ECO:0007669"/>
    <property type="project" value="InterPro"/>
</dbReference>
<dbReference type="GO" id="GO:0009772">
    <property type="term" value="P:photosynthetic electron transport in photosystem II"/>
    <property type="evidence" value="ECO:0007669"/>
    <property type="project" value="InterPro"/>
</dbReference>
<dbReference type="FunFam" id="3.10.680.10:FF:000001">
    <property type="entry name" value="Photosystem II CP47 reaction center protein"/>
    <property type="match status" value="1"/>
</dbReference>
<dbReference type="Gene3D" id="3.10.680.10">
    <property type="entry name" value="Photosystem II CP47 reaction center protein"/>
    <property type="match status" value="1"/>
</dbReference>
<dbReference type="HAMAP" id="MF_01495">
    <property type="entry name" value="PSII_PsbB_CP47"/>
    <property type="match status" value="1"/>
</dbReference>
<dbReference type="InterPro" id="IPR000932">
    <property type="entry name" value="PS_antenna-like"/>
</dbReference>
<dbReference type="InterPro" id="IPR036001">
    <property type="entry name" value="PS_II_antenna-like_sf"/>
</dbReference>
<dbReference type="InterPro" id="IPR017486">
    <property type="entry name" value="PSII_PsbB"/>
</dbReference>
<dbReference type="NCBIfam" id="TIGR03039">
    <property type="entry name" value="PS_II_CP47"/>
    <property type="match status" value="1"/>
</dbReference>
<dbReference type="PANTHER" id="PTHR33180">
    <property type="entry name" value="PHOTOSYSTEM II CP43 REACTION CENTER PROTEIN"/>
    <property type="match status" value="1"/>
</dbReference>
<dbReference type="PANTHER" id="PTHR33180:SF35">
    <property type="entry name" value="PHOTOSYSTEM II CP47 REACTION CENTER PROTEIN"/>
    <property type="match status" value="1"/>
</dbReference>
<dbReference type="Pfam" id="PF00421">
    <property type="entry name" value="PSII"/>
    <property type="match status" value="1"/>
</dbReference>
<dbReference type="SUPFAM" id="SSF161077">
    <property type="entry name" value="Photosystem II antenna protein-like"/>
    <property type="match status" value="1"/>
</dbReference>
<protein>
    <recommendedName>
        <fullName evidence="1">Photosystem II CP47 reaction center protein</fullName>
    </recommendedName>
    <alternativeName>
        <fullName evidence="1">PSII 47 kDa protein</fullName>
    </alternativeName>
    <alternativeName>
        <fullName evidence="1">Protein CP-47</fullName>
    </alternativeName>
</protein>
<reference key="1">
    <citation type="submission" date="2007-03" db="EMBL/GenBank/DDBJ databases">
        <title>Sequencing analysis of Draba nemoroza chloroplast DNA.</title>
        <authorList>
            <person name="Hosouchi T."/>
            <person name="Tsuruoka H."/>
            <person name="Kotani H."/>
        </authorList>
    </citation>
    <scope>NUCLEOTIDE SEQUENCE [LARGE SCALE GENOMIC DNA]</scope>
</reference>
<gene>
    <name evidence="1" type="primary">psbB</name>
</gene>
<keyword id="KW-0148">Chlorophyll</keyword>
<keyword id="KW-0150">Chloroplast</keyword>
<keyword id="KW-0157">Chromophore</keyword>
<keyword id="KW-0472">Membrane</keyword>
<keyword id="KW-0602">Photosynthesis</keyword>
<keyword id="KW-0604">Photosystem II</keyword>
<keyword id="KW-0934">Plastid</keyword>
<keyword id="KW-0793">Thylakoid</keyword>
<keyword id="KW-0812">Transmembrane</keyword>
<keyword id="KW-1133">Transmembrane helix</keyword>
<organism>
    <name type="scientific">Draba nemorosa</name>
    <name type="common">Woodland whitlowgrass</name>
    <dbReference type="NCBI Taxonomy" id="171822"/>
    <lineage>
        <taxon>Eukaryota</taxon>
        <taxon>Viridiplantae</taxon>
        <taxon>Streptophyta</taxon>
        <taxon>Embryophyta</taxon>
        <taxon>Tracheophyta</taxon>
        <taxon>Spermatophyta</taxon>
        <taxon>Magnoliopsida</taxon>
        <taxon>eudicotyledons</taxon>
        <taxon>Gunneridae</taxon>
        <taxon>Pentapetalae</taxon>
        <taxon>rosids</taxon>
        <taxon>malvids</taxon>
        <taxon>Brassicales</taxon>
        <taxon>Brassicaceae</taxon>
        <taxon>Arabideae</taxon>
        <taxon>Draba</taxon>
    </lineage>
</organism>
<sequence length="508" mass="56131">MGLPWYRVHTVVLNDPARLLSVHIMHTALVAGWAGSMALYELAVFDPSDPVLDPMWRQGMFVIPFMTRLGITNSWGGWNITGGTITNPGLWSYEGVAGAHIVFSGLCFLAAIWHWVYWDLEIFCDERTGKPSLDLPKIFGIHLFLSGVACFGFGAFHVTGLYGPGIWVSDPYGLTGKVQTVNPTWGVEGFDPFVPGGIASHHIAAGTLGILAGLFHLSVRPPQRLYKGLRMGNIETVLSSSIAAVFFAAFVVAGTMWYGSATTPIELFGPTRYQWDQGYFQQEIYRRVSAGLAENQSVSEAWSKIPEKLAFYDYIGNNPAKGGLFRAGSMDNGDGIAVGWLGHPVFRNKEGRELFVRRMPTFFDTFPVVLVYGFGIVRADVPFRRAESKYSVEQVGVTVEFYGGELNGVSYSDPATVKKYAIRAQLGEIFELDPATLKSYGVFRSSPRGWFTFGHASFALLFFFGHIWHGSRTLFRDVFAGIDPDLDAQVEFGAFQKLGDPTTKRQAV</sequence>
<accession>A4QL45</accession>
<geneLocation type="chloroplast"/>